<accession>C8VPS9</accession>
<accession>Q5BA85</accession>
<sequence length="6919" mass="764631">MEQSTFATAGSPNRTVTNNEVVEKDIREICAEVLRRPVGKIKLDKSFIAQGGDSLLAIKLMARCGEAGYTITINDMLQATSIRELCQSVKLAEGSSAPGKLSSGPVLDGPAQPAEIRTKPLTEAQKLYASTKAWDAKVFKLEGGIAESTLYAALKLLVSHHPILRANFTTLENNDLGLTYNDTIDAFAHRRIEIPTISTQAEQGYLTVGWEADGKREDGLFAATVFVQKDRDHGTCLARYLRLDFHRAIIDVSSWDILQRDLDHAVLGKPLARGYPETSFDSWASTHNLSDFTFRRSTPVESTNDERNTNERQHNRHQNDGKIELADVVILETDAAGLAKLEDESIHSVLRTQPEDFIVAALHIALKGVTRSEETLSFGIISNGRHSGGPKLSATVGCFDNIIRRSVERAEEDGGLGFLRKVKDTRMGFFNVSRISGVEDRSRYVLLHMGQLGRTTAPIADTLHELFHQDDFSILPHGCLAFVEPFLEQQQLKLRLRSRSAELGREKLGQLAGLFRAALKELIAECEMSEVQGTLSDFPFLKLTYSELDNLVSSRLKAVTGDPFRDVEAVFPCGPRQEAFLVAQAVYPDLYQCSFVIKLSSEDLNVELDCGRLRDAWVRLVARHPALRTVFIESPNRQGHFDQVVMKQGISSITFLENEGEEAARRLACRRPVTFKSYGQTHQVTFCRISPSSVYLRLDMSHAVVDGLSALVLMRDLFQLYSKQKLASRVMAYQDFVNYQSRLPMQESMTYWSNYLAGAQPSHFPLYGDQLSREDLRTVRSNIQLGSDVLGEFCAWALVLRSYTGLEDVCFSYATSGRDVPLKGINNTVGAFLNAVVCRIKLPPTATVPQALVKARNDFVESLSHQYYLALDDAQSGDFARFKSNTLMSCQRKAATELAGSGLAFELVDAANPNEYDMSINIQVGHEGLEVMIDYWNSRIGQRTVESVAQSFRQALLNIVKEEDAVLGEIDISTTQEINQLREWAKEIPPKADYRIHDKVYEQRLRRPDAWAVQGWDGDLTYQQLDDTANQLASYLIRLGVQPETKIPICFEKSKWAVISQLAILKAGGCVVPLGTTQPASRTRLILKDLQATIILTSGKFASRFMDLVTHTVVIDEAFMAELPPSEMVPCLATVDNAAFIIYTSGSTGVPKGVVLPHASLCTSLEHMGARFKLSPDTRTVQFSAYTFDISIQDIYTTWHYGGCLIILSEEDRISNLAPEMVKYQVNCAGLTSTVAGTIFPQDVPTLKKLVLLGEAVKQAVVDQWIGHVEVYNAYGPSECSMQASINRLTPGCNALNIGWAFAGALWVVDPNDYNRLVPIGAPGELLIEGPLQARGYLNSPEKTAAAFVVDAAWMIKNGFGSGRRLYRTGDLVQQNPDGSITYIGRRDTQIKVRGQRVEVGEIEHHLLQQDAVLDAAIIYPKQGPCKDRLVGLLTLRDFFCGKRPGQDIIPIPSGKLSHTKSQLAAASEELSNHVPEHMVPKIWIPLESMMPQNDSSKLDRKKLGVWLEAIDTAFLEALTKSSDAGSESREPETLLERQVQQAWADVLRLPPTQIPIEHKSFLSVGGDSITAMHVVSWLRVRGITVAVRDVLESKSVAQLAQTAEVKDEKTEGHQSLLSPMQKWYFESIADPELPLKSSGAHRYNSNICLVPRKLFEYSELAQAVGALVDRHPILRSRFQRHNVAGWQQSLHSDGDQPFALRHYTVSTSEEAEALIVEAQGSLDLEQGPVFFVEYIQVEDARNTDLLFMTAHRLVVDEVSWDIIRRDISVLLEGQQFPTSNPLSFQTWIKLQAQRSQNLEGIVFRSDLPPADFKYWGLNDGNTYEDETVEEVIFNSHDTNAYFRDANRALRTERVEILLAALLKSFQKTFPNRRLPAVFEINDGRNVGDSGLDFSNTVGNFECMTPIHIFLDEPHNGLDIVRQTKDARRSAFGRVLSDGQQAFTDRWVEVLFQYSEGLASETIFETVDLTGPGTSPVGKSTRRGCVFNVNVIAYPDKLRIRFKFNRNMKYQEKIRDWADSYANAISALGTELSGASPTLTVTDFPLLHLTSESLRVLQDEILPDAGLNCSDVEDIYPCSPIQQGILISQVKSPSEYYIQQSFEIIPTTSSGKLDHTRLLAAWQVLINRHPMLRTRFVRSASGSSERLFDQVVLKSCKAEAEHVECTDDDLFRNLAVKATLDERHIDKRIGHKLTIYSTSSNRTFGNIIISHALVDASSLMIIQAELAQAYDGKLAPDTIGAAYSEYISHLQKIPADQALDYWAKRLADAEPCYLRGMTEDGMQPATADDSTPRRPMQTVSIDINCIEKLHSFTETYGVTIANVFQLVWAMVLAQYTGSPNVSFGYLSSGRDVPVKDVETMVGPLINMMVTHIKLDMEASAQNTLKQIQENFFESFNYQRAPLVEIWHALQLQGRSLFNTALSYRHIVSAEKHQLSLALEQITGEDPTEYDVTVSVFASPEKISASLQYSPDFLSYDSANRLLGCVRQGIQSLVTNGDTHVGQLNTVTPKDILQVRAWNDKIPAVDGYCLIHDLFNEQRLLRPNATAVCAWDGDLTYQQLDEMSNALAHHLVTLGIGPEVMVALCLDKSKFAIIAQLSVLKAAGVVVSINPKHPTQRLELVLKDINAKVMLTSHQYSSQFRNLVPHILHMDETLFSALSSQPQPPSTNVTPNNAAFIIYTSGSTGMPKGVILTHLSLCSSFRAHGKIYEMSPSTRSLQFAAYTFDASISDIWGTMSHGGCVCVISEEERMNNLQGVIEAYGATHAQVTPTVASLLDIANIKCLTTLILGGEAVREAMIEEHAKAAGRVKVLNGYGPSECSIYTTCSAALVQKKQALNIGRPLVGSVWVIANGESICPIGAVGELWVEGPLLARGYHNDPKKTKAAFVTNPKWAKAIRLEGHRFYNTGDLVRQSPNGDLIYQARKDSQVKVRGQRVEIGEIEYRVKKLLPAVKSLVASLITPGGNSPNIMISVAMELSDDFLQRHLLSAPFHEIFLPNAPHLRDAFSQLHASLLEVLPSYMVPRLFVPVVHLPQTTSSKLDRRTIKQMLENLPGDVLFQYSLSTSLSVAPSTFMEKKLQSLWATVLNVDQDHVGVQDHFLHCGGDSFTAMRLVSLANAKDIPISVADVFRYPKLQEMAAHLEAQMGRRRDVQDIPRFGLWKEAQQTEASVSERELLRVAKLCDVAVHDIEDVYPCTPLQEGLMAITTQQPGSYIGRWVFRIQEAVDTNAFKRAWSSLTQKAPILRTRIAPSQSGGLQVVVRESVAWGGDLNLKQYLDKDLQQSFGYGQPLVRQALIYSGNKRYFVLTAHHSVYDGYSLRKLFDAVALLYDGKELAPTPAFSRFISYIGQQDLKAAKSFWQSQIKRKVGAPFPSLHKLSYRPQPTQKLSSSVEIRPVGGPNTLASSLRAAWALAISAYGGNDVLFGVALSGRSAPVPGILDMAAPTITTVPVHVHINPEQTINQYLTMVHKQSVDMIPFEHTGLQNIRRFVGQIDLPHLFAVQPAQERESSVHGKLLAYEHGHVPELNLDGYALTVECVTSDISDIPVTIEAHFDERMISASQTNDLLSRFSHIVTQLVTNGRDQTQLKYLDLLSKDEARRLFQFNQGIPPVKQALVHELVSQHVSTNPYAPAVCAWDGDLTREELDRLANKLALYLTTLGVIPETMVALCFEKSKWALVANLAVLKAGGAVVPIRADPIQRVQNILQQTGITTILASEGFASALEGLVPNVITIGDDLIQSLPSPVTQPISTVTPSNAAFVIFTSGSTGNPKGVVVEHGAMSTSMQAHGKKFGMNSETRAFNFAHFTFDISLHDIISTLQFGGCVCMPSERERVNNMADAMNRMGVNYSFLPPRVIHTIKPSDVPGLKTLVVGGEAVQPEYLEPWLNGVRVFNAYGPAECSIAATCNEVANKADVPNIGRAIAGGLWVVDENNYNRLLPLGAVGELLIEGPLLARGYLNDPIKTANAFICNPAWISRYSEHDHCSQRRERRMYRTGDLVRQMEDGSLIYVGRRDGQVKIRGQRVEIGEIEHHVTEHPSVVENVIVYPHCGPAQLQLVGILTLHGFISSDADEGIQTTPLDQLPHALQQASSVRDHLHSCIPEYMVPNSWISLAAMPHNSSDKIDRRRLTQWLETMEVEHFKILTQSYTEGTTTPSTSEEKNIQAVWADVLHASIGKVPMSRPFLAVGGDSVTAMQVVSKCRSQYSIYVTVRDVLQCESISQLAKKAVIKTTSPNTDTQLSTSSIDQAPAATSAPTAFDINASDLSKLETDVLPRTGVENLSAIESIYYCSPIQQGILMSQIKDHTTYQVRQAGEIRAADSSPVDMNRLLRAWQLVVQRHAILRTFFVPSPSGRELFYQVVLKRYTPTIPVLQSCSSDDFLAQFEGLERPEYAPGQPPYQLTLAQASTGQVYAQVDVNHVLMDASSMDLILNDLILAYDNMLPDSPAPSYGIYVSFLQQTFAFDSLNYWTNHLAGAEPSCLPASSNLDSGKRSLRTVSLEVDNIKPLQDFRDTHGVTIANITQLAWATVLSRYLGSRDVSFGYISNGRDAPIDGIHEMCGPMINLMVSRVQLAHPGTTVAEAAKQVQHNFLDAFNHQRTSLSDIQHALHLSERGLFNTTMIYKPKPMMDTHEKRSLVIESLAGEDPTEYDVQVKIVSDDKSLSLDLEYATTFIDEPSARRLLGSFGRALSSIAANPDANIDEIDVIPTGDVEVLHIWNSTVGETVPGSIHDKIHEQALSQPGAQAVCGWDGELTYAELTGMSDRLAHHLRNLGVREEVMVGLCFDKSMWTIVSMIAVLKSGGVIVPLGVQMPVQRLQHILNEITAPVVLTMDKHASKLRDITSANVLTIDGGFIATLPNPCHPPSESSLTSESAAVVIYTSGSTGTPKGVVLTHGTICTSIESHGPKLQMGPNTRALQYSAYVFDLSLLDILSTLRFGGCVCVVSEEDRVDTNSLTTKMEAMAVNFAVLTPTVASLIDPRTVPTLSTLVLAGEVVPHSAVETWASHVTLFNGYGPAESTILATTNGPIIEKEQASSVGTALAGAIWVVDTQDHNRLVPLGVVGELLISGPLVARGYLNDTERTSQSFITDPAFVSKYGFHSWAGKRIYKTGDLVRQDPTDGSIMFVGRADGQIKIRGQRVEVGEIEYWLRQHFDTQTVAVDVIGASTGDVALVAAIELRKDRSSNECVFLDVNHQLRESFLQLQAALLKALPSYMVPSKYIPIKNMPNTASGKLDRRALRTLIGGLKEEQLAQYSLADGGNVALSTETERRLARVWVAALNTSKEFGANAHFFRVGGDSVTAMRLVALARTAQPPILLSVSDVFKHPVLSDMANTIANSESTENCQYDNDVPPFLLLPYPQHERQARLQEIASQCKVEVDVIEDAYPCTPLQQGLMAITAQHPQAYISRWVFRLEDTIDESRFCQAWRTLVELNPILRTRIIQDPKAGGMQVVLQQQITWNNVLSELPSYIAEDSAKPMGFGDPLVRLAVVTSRQARFFVWTAHHSTYDGWTARKLMEAAFALYSNNPAPSFHPFTRFVQYLQSNSAEETRDYWKSQLEGGIGPSFPGSPKNGSPRKLRIQSCRIPANNSNDFTLSTLLRATWALILSQETGSQIVGFPTALSGRTAPVDGILDVLGPTITTVPIRVSVDPAQSLSAYLASIQQQATEMLPFEHAGLHNISRMTSLPLNFQHLFVVQPAVDRLDQANSGFQGLTPVPFETYGFHNYPLVIECSTNMTDTDSAVDLQLQFDPAVLSVEKATTILERFTHVFGQLQSAANEATCEVLVSDVIFMTPEDLGRIQKWNHFDERMTMADGCIHDLVHHQLLSCPDAQAVHAFDGHLTYRELHRLATRLAYHLEGLGVGPQVPVATIFEKTKWVVVTYLAVLKAGGTIVPVNHQHPKQRMQALVQSIGTRVILTSQDPGRLQGLVTGPVLKVDQDFFTQLPDSDNPHPVVQATDSAFIIFTSGSTGTSKAVVLQHGAIVSSMVQGHGSLYASPDTRAIQFSALNFDISIAEIFTTLSFGGCVCVISEDDRVSRLAEAMEEAAVNFAILTPTVASLLKPEQVPSLRRLLLVGEALRPEVAEPWSSSHVELHNAYGPAESSILTTFSQRIRDPVQAPNIGFPLAHSNLFVVDPSNYHNLLPVGMVGELLIEGPLLAREYLGDAKKTAEAFVTDPAWLQQYDLGPVSGRRFYRTGDLVQQKLDGSFIYIGRRDTQVKIHGQRVEIGEIEFWVKNKLPDVREVVAGLFKPIYEEDEPLLAVAMEVPSSSVESSGLLSLSDELREAFGELRRNLLTVVPSYMVPQLYLPFAKLPLTDSGKLNRRATWEMIHSCGSWSQYFLVDDIKAEPATVTERLLQSLWATVLKVPASSIGAKDDFFRSGGDSISAMRLVASAREDAHISLKVADVFRHPILSDMATLIDRKTTVTKPAYCPFSTMTDDYAIRDSIKPLLSVPSEIIDVAPTTDLQSLSIATSLRPSRDLMAYVSIDGIGSPNFARWRASCLEVVKKHDILRTAYVVYKNQLLQVVLRDYAPAVTHYQTDQSIEEFTKEFIAHDMHRPPQLGYPFLEFAIICSPVANRHRVLFRLSHAEYDAISLSYFVNSLREIYQRQSTTEYVGFPQYISSLANQDTWSSREYWRSLLKGCTMPAISSSSQPRRLPSRQVYHDSRRVSFKTLPAGITLSTIVRSAWALTLGQHVGNPDVLFGEVVSGRNGDPIAERAAGCCANLVPVRATIHPAWTTHDLLRSVQQQLVSRLPHESLGFRDLMRNCTDMPVGTVFTSLLNHLDQASEWTLDLDDGKYNVSVAKTEGAGDVSDVSVTSTASTDYVEIAMAYLEDGVTVEVAEKLLSQLCETVDAFMNGALDAELPTVDCVSELNAQGVNEAPKFEGDLVDASLVAFELQKRGHEVTVDEVVDRGLSLSGV</sequence>
<protein>
    <recommendedName>
        <fullName evidence="5">Nonribosomal peptide synthetase easA</fullName>
        <ecNumber evidence="7">6.3.2.-</ecNumber>
    </recommendedName>
    <alternativeName>
        <fullName evidence="5">Emericellamide biosynthesis protein A</fullName>
    </alternativeName>
</protein>
<feature type="chain" id="PRO_0000438969" description="Nonribosomal peptide synthetase easA">
    <location>
        <begin position="1"/>
        <end position="6919"/>
    </location>
</feature>
<feature type="domain" description="Carrier 1" evidence="2 7">
    <location>
        <begin position="17"/>
        <end position="93"/>
    </location>
</feature>
<feature type="domain" description="Carrier 2" evidence="2 7">
    <location>
        <begin position="1531"/>
        <end position="1608"/>
    </location>
</feature>
<feature type="domain" description="Carrier 3" evidence="2 7">
    <location>
        <begin position="3067"/>
        <end position="3143"/>
    </location>
</feature>
<feature type="domain" description="Carrier 4" evidence="2 7">
    <location>
        <begin position="4151"/>
        <end position="4228"/>
    </location>
</feature>
<feature type="domain" description="Carrier 5" evidence="2 7">
    <location>
        <begin position="5260"/>
        <end position="5337"/>
    </location>
</feature>
<feature type="domain" description="Carrier 6" evidence="2 7">
    <location>
        <begin position="6344"/>
        <end position="6421"/>
    </location>
</feature>
<feature type="region of interest" description="Epimerization 1" evidence="1 7">
    <location>
        <begin position="123"/>
        <end position="427"/>
    </location>
</feature>
<feature type="region of interest" description="Disordered" evidence="3">
    <location>
        <begin position="294"/>
        <end position="319"/>
    </location>
</feature>
<feature type="region of interest" description="Condensation 1" evidence="1 7">
    <location>
        <begin position="604"/>
        <end position="981"/>
    </location>
</feature>
<feature type="region of interest" description="Adenylation 1" evidence="1 7">
    <location>
        <begin position="1003"/>
        <end position="1394"/>
    </location>
</feature>
<feature type="region of interest" description="Epimerization 2" evidence="1 7">
    <location>
        <begin position="1617"/>
        <end position="2031"/>
    </location>
</feature>
<feature type="region of interest" description="Condensation 2" evidence="1 7">
    <location>
        <begin position="2072"/>
        <end position="2509"/>
    </location>
</feature>
<feature type="region of interest" description="Adenylation 2" evidence="1 7">
    <location>
        <begin position="2541"/>
        <end position="2930"/>
    </location>
</feature>
<feature type="region of interest" description="Condensation 3" evidence="1 7">
    <location>
        <begin position="3188"/>
        <end position="3599"/>
    </location>
</feature>
<feature type="region of interest" description="Adenylation 3" evidence="1 7">
    <location>
        <begin position="3620"/>
        <end position="4018"/>
    </location>
</feature>
<feature type="region of interest" description="Condensation 4" evidence="1 7">
    <location>
        <begin position="4282"/>
        <end position="4708"/>
    </location>
</feature>
<feature type="region of interest" description="Adenylation 4" evidence="1 7">
    <location>
        <begin position="4732"/>
        <end position="5133"/>
    </location>
</feature>
<feature type="region of interest" description="Condensation 5" evidence="1 7">
    <location>
        <begin position="5380"/>
        <end position="5775"/>
    </location>
</feature>
<feature type="region of interest" description="Adenylation 5" evidence="1 7">
    <location>
        <begin position="5824"/>
        <end position="6216"/>
    </location>
</feature>
<feature type="compositionally biased region" description="Basic and acidic residues" evidence="3">
    <location>
        <begin position="304"/>
        <end position="319"/>
    </location>
</feature>
<feature type="modified residue" description="O-(pantetheine 4'-phosphoryl)serine" evidence="2">
    <location>
        <position position="54"/>
    </location>
</feature>
<feature type="modified residue" description="O-(pantetheine 4'-phosphoryl)serine" evidence="2">
    <location>
        <position position="1569"/>
    </location>
</feature>
<feature type="modified residue" description="O-(pantetheine 4'-phosphoryl)serine" evidence="2">
    <location>
        <position position="3104"/>
    </location>
</feature>
<feature type="modified residue" description="O-(pantetheine 4'-phosphoryl)serine" evidence="2">
    <location>
        <position position="4188"/>
    </location>
</feature>
<feature type="modified residue" description="O-(pantetheine 4'-phosphoryl)serine" evidence="2">
    <location>
        <position position="5296"/>
    </location>
</feature>
<feature type="modified residue" description="O-(pantetheine 4'-phosphoryl)serine" evidence="2">
    <location>
        <position position="6381"/>
    </location>
</feature>
<comment type="function">
    <text evidence="4">Nonribosomal peptide synthetase; part of the gene cluster that mediates the biosynthesis of emericellamides, secondary metabolites acting as antibiotics (PubMed:18559263). The biosynthesis of emericellamides initiates from the highly reducing polyketide synthase easB which catalyzes the formation of the linear polyketide chain (PubMed:18559263). EasB produces several polyketides that can be further processed by the downstream enzymes (PubMed:18559263). The polyketides are released from easB as linear polyketide carboxylic acids, which are converted to CoA thioesters by the acyl-CoA ligase easD (PubMed:18559263). The substrates are then loaded onto the acyltransferase easC, which shuttles them to the first thiolation (T) domain of the nonribosomal peptide synthetase easA (PubMed:18559263). EasA then performs condensation of the polyketides with one glycine, two alanine, one valine and one leucine residues (PubMed:18559263). A last step of cyclization leads to the production of emericellamides (PubMed:18559263).</text>
</comment>
<comment type="pathway">
    <text evidence="4">Antibiotic biosynthesis.</text>
</comment>
<comment type="domain">
    <text evidence="4">The NRPS easA is a multimodular enzymatic assembly that contains 18 domains grouped into five modules corresponding to each of the five amino acid monomers incorporated (PubMed:18559263). The second to the fifth modules contain the three core domains, the condensation (C) domain responsible for catalyzing peptide bond formation, adenylation (A) domain responsible for selecting the amino acid monomer substrate, and the thiolation (T) domain (PubMed:18559263). The first module in the NRPS contains a unique T-E-C-A-T-E structure where (E) domains are epimerization domains (PubMed:18559263). The NRPS does not contain a TE domain at the end of module 5, presumably suggesting that TE is not necessary for the cyclization of the emericellamides (PubMed:18559263).</text>
</comment>
<comment type="disruption phenotype">
    <text evidence="4">Impairs the production of emerecellamide A, C, D, E and F (PubMed:18559263).</text>
</comment>
<comment type="sequence caution" evidence="6">
    <conflict type="erroneous gene model prediction">
        <sequence resource="EMBL-CDS" id="EAA64650"/>
    </conflict>
</comment>
<dbReference type="EC" id="6.3.2.-" evidence="7"/>
<dbReference type="EMBL" id="AACD01000043">
    <property type="protein sequence ID" value="EAA64650.1"/>
    <property type="status" value="ALT_SEQ"/>
    <property type="molecule type" value="Genomic_DNA"/>
</dbReference>
<dbReference type="EMBL" id="BN001307">
    <property type="protein sequence ID" value="CBF87069.1"/>
    <property type="molecule type" value="Genomic_DNA"/>
</dbReference>
<dbReference type="RefSeq" id="XP_660149.1">
    <property type="nucleotide sequence ID" value="XM_655057.1"/>
</dbReference>
<dbReference type="SMR" id="C8VPS9"/>
<dbReference type="STRING" id="227321.C8VPS9"/>
<dbReference type="EnsemblFungi" id="CBF87069">
    <property type="protein sequence ID" value="CBF87069"/>
    <property type="gene ID" value="ANIA_02545"/>
</dbReference>
<dbReference type="KEGG" id="ani:ANIA_02545"/>
<dbReference type="VEuPathDB" id="FungiDB:AN2545"/>
<dbReference type="eggNOG" id="KOG1176">
    <property type="taxonomic scope" value="Eukaryota"/>
</dbReference>
<dbReference type="eggNOG" id="KOG1178">
    <property type="taxonomic scope" value="Eukaryota"/>
</dbReference>
<dbReference type="HOGENOM" id="CLU_000022_60_0_1"/>
<dbReference type="InParanoid" id="C8VPS9"/>
<dbReference type="OMA" id="PREIEHH"/>
<dbReference type="OrthoDB" id="416786at2759"/>
<dbReference type="Proteomes" id="UP000000560">
    <property type="component" value="Chromosome VII"/>
</dbReference>
<dbReference type="GO" id="GO:0005737">
    <property type="term" value="C:cytoplasm"/>
    <property type="evidence" value="ECO:0000318"/>
    <property type="project" value="GO_Central"/>
</dbReference>
<dbReference type="GO" id="GO:0016853">
    <property type="term" value="F:isomerase activity"/>
    <property type="evidence" value="ECO:0007669"/>
    <property type="project" value="UniProtKB-KW"/>
</dbReference>
<dbReference type="GO" id="GO:0016874">
    <property type="term" value="F:ligase activity"/>
    <property type="evidence" value="ECO:0007669"/>
    <property type="project" value="UniProtKB-KW"/>
</dbReference>
<dbReference type="GO" id="GO:0031177">
    <property type="term" value="F:phosphopantetheine binding"/>
    <property type="evidence" value="ECO:0000318"/>
    <property type="project" value="GO_Central"/>
</dbReference>
<dbReference type="GO" id="GO:0043041">
    <property type="term" value="P:amino acid activation for nonribosomal peptide biosynthetic process"/>
    <property type="evidence" value="ECO:0000318"/>
    <property type="project" value="GO_Central"/>
</dbReference>
<dbReference type="GO" id="GO:1900557">
    <property type="term" value="P:emericellamide biosynthetic process"/>
    <property type="evidence" value="ECO:0000315"/>
    <property type="project" value="AspGD"/>
</dbReference>
<dbReference type="GO" id="GO:0019748">
    <property type="term" value="P:secondary metabolic process"/>
    <property type="evidence" value="ECO:0000303"/>
    <property type="project" value="AspGD"/>
</dbReference>
<dbReference type="GO" id="GO:0044550">
    <property type="term" value="P:secondary metabolite biosynthetic process"/>
    <property type="evidence" value="ECO:0000318"/>
    <property type="project" value="GO_Central"/>
</dbReference>
<dbReference type="CDD" id="cd05918">
    <property type="entry name" value="A_NRPS_SidN3_like"/>
    <property type="match status" value="5"/>
</dbReference>
<dbReference type="CDD" id="cd19542">
    <property type="entry name" value="CT_NRPS-like"/>
    <property type="match status" value="4"/>
</dbReference>
<dbReference type="CDD" id="cd19534">
    <property type="entry name" value="E_NRPS"/>
    <property type="match status" value="1"/>
</dbReference>
<dbReference type="CDD" id="cd19545">
    <property type="entry name" value="FUM14_C_NRPS-like"/>
    <property type="match status" value="2"/>
</dbReference>
<dbReference type="FunFam" id="3.40.50.980:FF:000001">
    <property type="entry name" value="Non-ribosomal peptide synthetase"/>
    <property type="match status" value="2"/>
</dbReference>
<dbReference type="FunFam" id="3.30.559.10:FF:000048">
    <property type="entry name" value="Nonribosomal peptide synthase inpB"/>
    <property type="match status" value="1"/>
</dbReference>
<dbReference type="FunFam" id="3.30.559.10:FF:000016">
    <property type="entry name" value="Nonribosomal peptide synthase Pes1"/>
    <property type="match status" value="1"/>
</dbReference>
<dbReference type="FunFam" id="3.30.559.10:FF:000017">
    <property type="entry name" value="Nonribosomal peptide synthase Pes1"/>
    <property type="match status" value="2"/>
</dbReference>
<dbReference type="FunFam" id="3.30.559.30:FF:000002">
    <property type="entry name" value="Nonribosomal peptide synthase Pes1"/>
    <property type="match status" value="1"/>
</dbReference>
<dbReference type="FunFam" id="3.30.559.30:FF:000005">
    <property type="entry name" value="Nonribosomal peptide synthase Pes1"/>
    <property type="match status" value="2"/>
</dbReference>
<dbReference type="FunFam" id="3.30.300.30:FF:000015">
    <property type="entry name" value="Nonribosomal peptide synthase SidD"/>
    <property type="match status" value="5"/>
</dbReference>
<dbReference type="FunFam" id="3.30.559.30:FF:000003">
    <property type="entry name" value="Nonribosomal peptide synthase SidD"/>
    <property type="match status" value="1"/>
</dbReference>
<dbReference type="FunFam" id="3.30.559.10:FF:000034">
    <property type="entry name" value="Nonribosomal peptide synthase sidD"/>
    <property type="match status" value="1"/>
</dbReference>
<dbReference type="FunFam" id="1.10.1200.10:FF:000005">
    <property type="entry name" value="Nonribosomal peptide synthetase 1"/>
    <property type="match status" value="2"/>
</dbReference>
<dbReference type="FunFam" id="3.40.50.12780:FF:000014">
    <property type="entry name" value="Nonribosomal peptide synthetase 1"/>
    <property type="match status" value="5"/>
</dbReference>
<dbReference type="FunFam" id="1.10.1200.10:FF:000067">
    <property type="entry name" value="Nonribosomal peptide synthetase easA"/>
    <property type="match status" value="1"/>
</dbReference>
<dbReference type="FunFam" id="3.30.559.30:FF:000034">
    <property type="entry name" value="Nonribosomal peptide synthetase easA"/>
    <property type="match status" value="1"/>
</dbReference>
<dbReference type="Gene3D" id="3.30.300.30">
    <property type="match status" value="5"/>
</dbReference>
<dbReference type="Gene3D" id="1.10.1200.10">
    <property type="entry name" value="ACP-like"/>
    <property type="match status" value="6"/>
</dbReference>
<dbReference type="Gene3D" id="3.30.559.10">
    <property type="entry name" value="Chloramphenicol acetyltransferase-like domain"/>
    <property type="match status" value="8"/>
</dbReference>
<dbReference type="Gene3D" id="3.40.50.12780">
    <property type="entry name" value="N-terminal domain of ligase-like"/>
    <property type="match status" value="5"/>
</dbReference>
<dbReference type="Gene3D" id="3.30.559.30">
    <property type="entry name" value="Nonribosomal peptide synthetase, condensation domain"/>
    <property type="match status" value="8"/>
</dbReference>
<dbReference type="InterPro" id="IPR010071">
    <property type="entry name" value="AA_adenyl_dom"/>
</dbReference>
<dbReference type="InterPro" id="IPR036736">
    <property type="entry name" value="ACP-like_sf"/>
</dbReference>
<dbReference type="InterPro" id="IPR045851">
    <property type="entry name" value="AMP-bd_C_sf"/>
</dbReference>
<dbReference type="InterPro" id="IPR020845">
    <property type="entry name" value="AMP-binding_CS"/>
</dbReference>
<dbReference type="InterPro" id="IPR000873">
    <property type="entry name" value="AMP-dep_synth/lig_dom"/>
</dbReference>
<dbReference type="InterPro" id="IPR042099">
    <property type="entry name" value="ANL_N_sf"/>
</dbReference>
<dbReference type="InterPro" id="IPR023213">
    <property type="entry name" value="CAT-like_dom_sf"/>
</dbReference>
<dbReference type="InterPro" id="IPR001242">
    <property type="entry name" value="Condensatn"/>
</dbReference>
<dbReference type="InterPro" id="IPR020806">
    <property type="entry name" value="PKS_PP-bd"/>
</dbReference>
<dbReference type="InterPro" id="IPR009081">
    <property type="entry name" value="PP-bd_ACP"/>
</dbReference>
<dbReference type="InterPro" id="IPR006162">
    <property type="entry name" value="Ppantetheine_attach_site"/>
</dbReference>
<dbReference type="NCBIfam" id="TIGR01733">
    <property type="entry name" value="AA-adenyl-dom"/>
    <property type="match status" value="5"/>
</dbReference>
<dbReference type="NCBIfam" id="NF003417">
    <property type="entry name" value="PRK04813.1"/>
    <property type="match status" value="5"/>
</dbReference>
<dbReference type="PANTHER" id="PTHR45527:SF1">
    <property type="entry name" value="FATTY ACID SYNTHASE"/>
    <property type="match status" value="1"/>
</dbReference>
<dbReference type="PANTHER" id="PTHR45527">
    <property type="entry name" value="NONRIBOSOMAL PEPTIDE SYNTHETASE"/>
    <property type="match status" value="1"/>
</dbReference>
<dbReference type="Pfam" id="PF00501">
    <property type="entry name" value="AMP-binding"/>
    <property type="match status" value="5"/>
</dbReference>
<dbReference type="Pfam" id="PF00668">
    <property type="entry name" value="Condensation"/>
    <property type="match status" value="8"/>
</dbReference>
<dbReference type="Pfam" id="PF00550">
    <property type="entry name" value="PP-binding"/>
    <property type="match status" value="6"/>
</dbReference>
<dbReference type="SMART" id="SM00823">
    <property type="entry name" value="PKS_PP"/>
    <property type="match status" value="6"/>
</dbReference>
<dbReference type="SUPFAM" id="SSF56801">
    <property type="entry name" value="Acetyl-CoA synthetase-like"/>
    <property type="match status" value="5"/>
</dbReference>
<dbReference type="SUPFAM" id="SSF47336">
    <property type="entry name" value="ACP-like"/>
    <property type="match status" value="6"/>
</dbReference>
<dbReference type="SUPFAM" id="SSF52777">
    <property type="entry name" value="CoA-dependent acyltransferases"/>
    <property type="match status" value="16"/>
</dbReference>
<dbReference type="PROSITE" id="PS00455">
    <property type="entry name" value="AMP_BINDING"/>
    <property type="match status" value="5"/>
</dbReference>
<dbReference type="PROSITE" id="PS50075">
    <property type="entry name" value="CARRIER"/>
    <property type="match status" value="6"/>
</dbReference>
<dbReference type="PROSITE" id="PS00012">
    <property type="entry name" value="PHOSPHOPANTETHEINE"/>
    <property type="match status" value="3"/>
</dbReference>
<gene>
    <name evidence="5" type="primary">easA</name>
    <name type="ORF">AN2545</name>
</gene>
<name>EASA_EMENI</name>
<reference key="1">
    <citation type="journal article" date="2005" name="Nature">
        <title>Sequencing of Aspergillus nidulans and comparative analysis with A. fumigatus and A. oryzae.</title>
        <authorList>
            <person name="Galagan J.E."/>
            <person name="Calvo S.E."/>
            <person name="Cuomo C."/>
            <person name="Ma L.-J."/>
            <person name="Wortman J.R."/>
            <person name="Batzoglou S."/>
            <person name="Lee S.-I."/>
            <person name="Bastuerkmen M."/>
            <person name="Spevak C.C."/>
            <person name="Clutterbuck J."/>
            <person name="Kapitonov V."/>
            <person name="Jurka J."/>
            <person name="Scazzocchio C."/>
            <person name="Farman M.L."/>
            <person name="Butler J."/>
            <person name="Purcell S."/>
            <person name="Harris S."/>
            <person name="Braus G.H."/>
            <person name="Draht O."/>
            <person name="Busch S."/>
            <person name="D'Enfert C."/>
            <person name="Bouchier C."/>
            <person name="Goldman G.H."/>
            <person name="Bell-Pedersen D."/>
            <person name="Griffiths-Jones S."/>
            <person name="Doonan J.H."/>
            <person name="Yu J."/>
            <person name="Vienken K."/>
            <person name="Pain A."/>
            <person name="Freitag M."/>
            <person name="Selker E.U."/>
            <person name="Archer D.B."/>
            <person name="Penalva M.A."/>
            <person name="Oakley B.R."/>
            <person name="Momany M."/>
            <person name="Tanaka T."/>
            <person name="Kumagai T."/>
            <person name="Asai K."/>
            <person name="Machida M."/>
            <person name="Nierman W.C."/>
            <person name="Denning D.W."/>
            <person name="Caddick M.X."/>
            <person name="Hynes M."/>
            <person name="Paoletti M."/>
            <person name="Fischer R."/>
            <person name="Miller B.L."/>
            <person name="Dyer P.S."/>
            <person name="Sachs M.S."/>
            <person name="Osmani S.A."/>
            <person name="Birren B.W."/>
        </authorList>
    </citation>
    <scope>NUCLEOTIDE SEQUENCE [LARGE SCALE GENOMIC DNA]</scope>
    <source>
        <strain>FGSC A4 / ATCC 38163 / CBS 112.46 / NRRL 194 / M139</strain>
    </source>
</reference>
<reference key="2">
    <citation type="journal article" date="2009" name="Fungal Genet. Biol.">
        <title>The 2008 update of the Aspergillus nidulans genome annotation: a community effort.</title>
        <authorList>
            <person name="Wortman J.R."/>
            <person name="Gilsenan J.M."/>
            <person name="Joardar V."/>
            <person name="Deegan J."/>
            <person name="Clutterbuck J."/>
            <person name="Andersen M.R."/>
            <person name="Archer D."/>
            <person name="Bencina M."/>
            <person name="Braus G."/>
            <person name="Coutinho P."/>
            <person name="von Dohren H."/>
            <person name="Doonan J."/>
            <person name="Driessen A.J."/>
            <person name="Durek P."/>
            <person name="Espeso E."/>
            <person name="Fekete E."/>
            <person name="Flipphi M."/>
            <person name="Estrada C.G."/>
            <person name="Geysens S."/>
            <person name="Goldman G."/>
            <person name="de Groot P.W."/>
            <person name="Hansen K."/>
            <person name="Harris S.D."/>
            <person name="Heinekamp T."/>
            <person name="Helmstaedt K."/>
            <person name="Henrissat B."/>
            <person name="Hofmann G."/>
            <person name="Homan T."/>
            <person name="Horio T."/>
            <person name="Horiuchi H."/>
            <person name="James S."/>
            <person name="Jones M."/>
            <person name="Karaffa L."/>
            <person name="Karanyi Z."/>
            <person name="Kato M."/>
            <person name="Keller N."/>
            <person name="Kelly D.E."/>
            <person name="Kiel J.A."/>
            <person name="Kim J.M."/>
            <person name="van der Klei I.J."/>
            <person name="Klis F.M."/>
            <person name="Kovalchuk A."/>
            <person name="Krasevec N."/>
            <person name="Kubicek C.P."/>
            <person name="Liu B."/>
            <person name="Maccabe A."/>
            <person name="Meyer V."/>
            <person name="Mirabito P."/>
            <person name="Miskei M."/>
            <person name="Mos M."/>
            <person name="Mullins J."/>
            <person name="Nelson D.R."/>
            <person name="Nielsen J."/>
            <person name="Oakley B.R."/>
            <person name="Osmani S.A."/>
            <person name="Pakula T."/>
            <person name="Paszewski A."/>
            <person name="Paulsen I."/>
            <person name="Pilsyk S."/>
            <person name="Pocsi I."/>
            <person name="Punt P.J."/>
            <person name="Ram A.F."/>
            <person name="Ren Q."/>
            <person name="Robellet X."/>
            <person name="Robson G."/>
            <person name="Seiboth B."/>
            <person name="van Solingen P."/>
            <person name="Specht T."/>
            <person name="Sun J."/>
            <person name="Taheri-Talesh N."/>
            <person name="Takeshita N."/>
            <person name="Ussery D."/>
            <person name="vanKuyk P.A."/>
            <person name="Visser H."/>
            <person name="van de Vondervoort P.J."/>
            <person name="de Vries R.P."/>
            <person name="Walton J."/>
            <person name="Xiang X."/>
            <person name="Xiong Y."/>
            <person name="Zeng A.P."/>
            <person name="Brandt B.W."/>
            <person name="Cornell M.J."/>
            <person name="van den Hondel C.A."/>
            <person name="Visser J."/>
            <person name="Oliver S.G."/>
            <person name="Turner G."/>
        </authorList>
    </citation>
    <scope>GENOME REANNOTATION</scope>
    <source>
        <strain>FGSC A4 / ATCC 38163 / CBS 112.46 / NRRL 194 / M139</strain>
    </source>
</reference>
<reference key="3">
    <citation type="journal article" date="2008" name="Chem. Biol.">
        <title>Molecular genetic mining of the Aspergillus secondary metabolome: discovery of the emericellamide biosynthetic pathway.</title>
        <authorList>
            <person name="Chiang Y.M."/>
            <person name="Szewczyk E."/>
            <person name="Nayak T."/>
            <person name="Davidson A.D."/>
            <person name="Sanchez J.F."/>
            <person name="Lo H.C."/>
            <person name="Ho W.Y."/>
            <person name="Simityan H."/>
            <person name="Kuo E."/>
            <person name="Praseuth A."/>
            <person name="Watanabe K."/>
            <person name="Oakley B.R."/>
            <person name="Wang C.C."/>
        </authorList>
    </citation>
    <scope>FUNCTION</scope>
    <scope>DOMAIN</scope>
    <scope>DISRUPTION PHENOTYPE</scope>
</reference>
<proteinExistence type="inferred from homology"/>
<keyword id="KW-0413">Isomerase</keyword>
<keyword id="KW-0436">Ligase</keyword>
<keyword id="KW-0596">Phosphopantetheine</keyword>
<keyword id="KW-0597">Phosphoprotein</keyword>
<keyword id="KW-1185">Reference proteome</keyword>
<keyword id="KW-0677">Repeat</keyword>
<evidence type="ECO:0000255" key="1"/>
<evidence type="ECO:0000255" key="2">
    <source>
        <dbReference type="PROSITE-ProRule" id="PRU00258"/>
    </source>
</evidence>
<evidence type="ECO:0000256" key="3">
    <source>
        <dbReference type="SAM" id="MobiDB-lite"/>
    </source>
</evidence>
<evidence type="ECO:0000269" key="4">
    <source>
    </source>
</evidence>
<evidence type="ECO:0000303" key="5">
    <source>
    </source>
</evidence>
<evidence type="ECO:0000305" key="6"/>
<evidence type="ECO:0000305" key="7">
    <source>
    </source>
</evidence>
<organism>
    <name type="scientific">Emericella nidulans (strain FGSC A4 / ATCC 38163 / CBS 112.46 / NRRL 194 / M139)</name>
    <name type="common">Aspergillus nidulans</name>
    <dbReference type="NCBI Taxonomy" id="227321"/>
    <lineage>
        <taxon>Eukaryota</taxon>
        <taxon>Fungi</taxon>
        <taxon>Dikarya</taxon>
        <taxon>Ascomycota</taxon>
        <taxon>Pezizomycotina</taxon>
        <taxon>Eurotiomycetes</taxon>
        <taxon>Eurotiomycetidae</taxon>
        <taxon>Eurotiales</taxon>
        <taxon>Aspergillaceae</taxon>
        <taxon>Aspergillus</taxon>
        <taxon>Aspergillus subgen. Nidulantes</taxon>
    </lineage>
</organism>